<sequence>MIKLRLKRYGKKRESSYRIVAMNSDSRRDGRPLEELGFYNPRTDETRLDVPGITRRLEQGAQPTDTVRDILKKANVLELSRTGVNTQANVSVSHAESTEAITNAEPIQATANTESNEVSDSESTATATIRESEEQPPISES</sequence>
<evidence type="ECO:0000255" key="1">
    <source>
        <dbReference type="HAMAP-Rule" id="MF_00385"/>
    </source>
</evidence>
<evidence type="ECO:0000256" key="2">
    <source>
        <dbReference type="SAM" id="MobiDB-lite"/>
    </source>
</evidence>
<evidence type="ECO:0000305" key="3"/>
<gene>
    <name evidence="1" type="primary">rpsP</name>
    <name evidence="1" type="synonym">rps16</name>
    <name type="ordered locus">Tery_2536</name>
</gene>
<organism>
    <name type="scientific">Trichodesmium erythraeum (strain IMS101)</name>
    <dbReference type="NCBI Taxonomy" id="203124"/>
    <lineage>
        <taxon>Bacteria</taxon>
        <taxon>Bacillati</taxon>
        <taxon>Cyanobacteriota</taxon>
        <taxon>Cyanophyceae</taxon>
        <taxon>Oscillatoriophycideae</taxon>
        <taxon>Oscillatoriales</taxon>
        <taxon>Microcoleaceae</taxon>
        <taxon>Trichodesmium</taxon>
    </lineage>
</organism>
<protein>
    <recommendedName>
        <fullName evidence="1">Small ribosomal subunit protein bS16</fullName>
    </recommendedName>
    <alternativeName>
        <fullName evidence="3">30S ribosomal protein S16</fullName>
    </alternativeName>
</protein>
<reference key="1">
    <citation type="journal article" date="2015" name="Proc. Natl. Acad. Sci. U.S.A.">
        <title>Trichodesmium genome maintains abundant, widespread noncoding DNA in situ, despite oligotrophic lifestyle.</title>
        <authorList>
            <person name="Walworth N."/>
            <person name="Pfreundt U."/>
            <person name="Nelson W.C."/>
            <person name="Mincer T."/>
            <person name="Heidelberg J.F."/>
            <person name="Fu F."/>
            <person name="Waterbury J.B."/>
            <person name="Glavina del Rio T."/>
            <person name="Goodwin L."/>
            <person name="Kyrpides N.C."/>
            <person name="Land M.L."/>
            <person name="Woyke T."/>
            <person name="Hutchins D.A."/>
            <person name="Hess W.R."/>
            <person name="Webb E.A."/>
        </authorList>
    </citation>
    <scope>NUCLEOTIDE SEQUENCE [LARGE SCALE GENOMIC DNA]</scope>
    <source>
        <strain>IMS101</strain>
    </source>
</reference>
<dbReference type="EMBL" id="CP000393">
    <property type="protein sequence ID" value="ABG51738.1"/>
    <property type="molecule type" value="Genomic_DNA"/>
</dbReference>
<dbReference type="SMR" id="Q111T6"/>
<dbReference type="STRING" id="203124.Tery_2536"/>
<dbReference type="KEGG" id="ter:Tery_2536"/>
<dbReference type="eggNOG" id="COG0228">
    <property type="taxonomic scope" value="Bacteria"/>
</dbReference>
<dbReference type="HOGENOM" id="CLU_100590_3_2_3"/>
<dbReference type="OrthoDB" id="9807878at2"/>
<dbReference type="GO" id="GO:0005737">
    <property type="term" value="C:cytoplasm"/>
    <property type="evidence" value="ECO:0007669"/>
    <property type="project" value="UniProtKB-ARBA"/>
</dbReference>
<dbReference type="GO" id="GO:0015935">
    <property type="term" value="C:small ribosomal subunit"/>
    <property type="evidence" value="ECO:0007669"/>
    <property type="project" value="TreeGrafter"/>
</dbReference>
<dbReference type="GO" id="GO:0003735">
    <property type="term" value="F:structural constituent of ribosome"/>
    <property type="evidence" value="ECO:0007669"/>
    <property type="project" value="InterPro"/>
</dbReference>
<dbReference type="GO" id="GO:0006412">
    <property type="term" value="P:translation"/>
    <property type="evidence" value="ECO:0007669"/>
    <property type="project" value="UniProtKB-UniRule"/>
</dbReference>
<dbReference type="Gene3D" id="3.30.1320.10">
    <property type="match status" value="1"/>
</dbReference>
<dbReference type="HAMAP" id="MF_00385">
    <property type="entry name" value="Ribosomal_bS16"/>
    <property type="match status" value="1"/>
</dbReference>
<dbReference type="InterPro" id="IPR000307">
    <property type="entry name" value="Ribosomal_bS16"/>
</dbReference>
<dbReference type="InterPro" id="IPR020592">
    <property type="entry name" value="Ribosomal_bS16_CS"/>
</dbReference>
<dbReference type="InterPro" id="IPR023803">
    <property type="entry name" value="Ribosomal_bS16_dom_sf"/>
</dbReference>
<dbReference type="NCBIfam" id="TIGR00002">
    <property type="entry name" value="S16"/>
    <property type="match status" value="1"/>
</dbReference>
<dbReference type="PANTHER" id="PTHR12919">
    <property type="entry name" value="30S RIBOSOMAL PROTEIN S16"/>
    <property type="match status" value="1"/>
</dbReference>
<dbReference type="PANTHER" id="PTHR12919:SF20">
    <property type="entry name" value="SMALL RIBOSOMAL SUBUNIT PROTEIN BS16M"/>
    <property type="match status" value="1"/>
</dbReference>
<dbReference type="Pfam" id="PF00886">
    <property type="entry name" value="Ribosomal_S16"/>
    <property type="match status" value="1"/>
</dbReference>
<dbReference type="SUPFAM" id="SSF54565">
    <property type="entry name" value="Ribosomal protein S16"/>
    <property type="match status" value="1"/>
</dbReference>
<dbReference type="PROSITE" id="PS00732">
    <property type="entry name" value="RIBOSOMAL_S16"/>
    <property type="match status" value="1"/>
</dbReference>
<accession>Q111T6</accession>
<name>RS16_TRIEI</name>
<feature type="chain" id="PRO_1000049373" description="Small ribosomal subunit protein bS16">
    <location>
        <begin position="1"/>
        <end position="141"/>
    </location>
</feature>
<feature type="region of interest" description="Disordered" evidence="2">
    <location>
        <begin position="89"/>
        <end position="141"/>
    </location>
</feature>
<feature type="compositionally biased region" description="Polar residues" evidence="2">
    <location>
        <begin position="89"/>
        <end position="101"/>
    </location>
</feature>
<feature type="compositionally biased region" description="Polar residues" evidence="2">
    <location>
        <begin position="109"/>
        <end position="129"/>
    </location>
</feature>
<keyword id="KW-0687">Ribonucleoprotein</keyword>
<keyword id="KW-0689">Ribosomal protein</keyword>
<comment type="similarity">
    <text evidence="1">Belongs to the bacterial ribosomal protein bS16 family.</text>
</comment>
<proteinExistence type="inferred from homology"/>